<gene>
    <name evidence="1" type="primary">bioB</name>
    <name type="ordered locus">P9215_12291</name>
</gene>
<protein>
    <recommendedName>
        <fullName evidence="1">Biotin synthase</fullName>
        <ecNumber evidence="1">2.8.1.6</ecNumber>
    </recommendedName>
</protein>
<keyword id="KW-0001">2Fe-2S</keyword>
<keyword id="KW-0004">4Fe-4S</keyword>
<keyword id="KW-0093">Biotin biosynthesis</keyword>
<keyword id="KW-0408">Iron</keyword>
<keyword id="KW-0411">Iron-sulfur</keyword>
<keyword id="KW-0479">Metal-binding</keyword>
<keyword id="KW-0949">S-adenosyl-L-methionine</keyword>
<keyword id="KW-0808">Transferase</keyword>
<reference key="1">
    <citation type="journal article" date="2007" name="PLoS Genet.">
        <title>Patterns and implications of gene gain and loss in the evolution of Prochlorococcus.</title>
        <authorList>
            <person name="Kettler G.C."/>
            <person name="Martiny A.C."/>
            <person name="Huang K."/>
            <person name="Zucker J."/>
            <person name="Coleman M.L."/>
            <person name="Rodrigue S."/>
            <person name="Chen F."/>
            <person name="Lapidus A."/>
            <person name="Ferriera S."/>
            <person name="Johnson J."/>
            <person name="Steglich C."/>
            <person name="Church G.M."/>
            <person name="Richardson P."/>
            <person name="Chisholm S.W."/>
        </authorList>
    </citation>
    <scope>NUCLEOTIDE SEQUENCE [LARGE SCALE GENOMIC DNA]</scope>
    <source>
        <strain>MIT 9215</strain>
    </source>
</reference>
<organism>
    <name type="scientific">Prochlorococcus marinus (strain MIT 9215)</name>
    <dbReference type="NCBI Taxonomy" id="93060"/>
    <lineage>
        <taxon>Bacteria</taxon>
        <taxon>Bacillati</taxon>
        <taxon>Cyanobacteriota</taxon>
        <taxon>Cyanophyceae</taxon>
        <taxon>Synechococcales</taxon>
        <taxon>Prochlorococcaceae</taxon>
        <taxon>Prochlorococcus</taxon>
    </lineage>
</organism>
<proteinExistence type="inferred from homology"/>
<dbReference type="EC" id="2.8.1.6" evidence="1"/>
<dbReference type="EMBL" id="CP000825">
    <property type="protein sequence ID" value="ABV50844.1"/>
    <property type="molecule type" value="Genomic_DNA"/>
</dbReference>
<dbReference type="RefSeq" id="WP_002808166.1">
    <property type="nucleotide sequence ID" value="NC_009840.1"/>
</dbReference>
<dbReference type="SMR" id="A8G5G3"/>
<dbReference type="STRING" id="93060.P9215_12291"/>
<dbReference type="KEGG" id="pmh:P9215_12291"/>
<dbReference type="eggNOG" id="COG0502">
    <property type="taxonomic scope" value="Bacteria"/>
</dbReference>
<dbReference type="HOGENOM" id="CLU_033172_1_1_3"/>
<dbReference type="OrthoDB" id="9786826at2"/>
<dbReference type="UniPathway" id="UPA00078">
    <property type="reaction ID" value="UER00162"/>
</dbReference>
<dbReference type="Proteomes" id="UP000002014">
    <property type="component" value="Chromosome"/>
</dbReference>
<dbReference type="GO" id="GO:0051537">
    <property type="term" value="F:2 iron, 2 sulfur cluster binding"/>
    <property type="evidence" value="ECO:0007669"/>
    <property type="project" value="UniProtKB-KW"/>
</dbReference>
<dbReference type="GO" id="GO:0051539">
    <property type="term" value="F:4 iron, 4 sulfur cluster binding"/>
    <property type="evidence" value="ECO:0007669"/>
    <property type="project" value="UniProtKB-KW"/>
</dbReference>
<dbReference type="GO" id="GO:0004076">
    <property type="term" value="F:biotin synthase activity"/>
    <property type="evidence" value="ECO:0007669"/>
    <property type="project" value="UniProtKB-UniRule"/>
</dbReference>
<dbReference type="GO" id="GO:0005506">
    <property type="term" value="F:iron ion binding"/>
    <property type="evidence" value="ECO:0007669"/>
    <property type="project" value="UniProtKB-UniRule"/>
</dbReference>
<dbReference type="GO" id="GO:0009102">
    <property type="term" value="P:biotin biosynthetic process"/>
    <property type="evidence" value="ECO:0007669"/>
    <property type="project" value="UniProtKB-UniRule"/>
</dbReference>
<dbReference type="CDD" id="cd01335">
    <property type="entry name" value="Radical_SAM"/>
    <property type="match status" value="1"/>
</dbReference>
<dbReference type="Gene3D" id="3.20.20.70">
    <property type="entry name" value="Aldolase class I"/>
    <property type="match status" value="1"/>
</dbReference>
<dbReference type="HAMAP" id="MF_01694">
    <property type="entry name" value="BioB"/>
    <property type="match status" value="1"/>
</dbReference>
<dbReference type="InterPro" id="IPR013785">
    <property type="entry name" value="Aldolase_TIM"/>
</dbReference>
<dbReference type="InterPro" id="IPR010722">
    <property type="entry name" value="BATS_dom"/>
</dbReference>
<dbReference type="InterPro" id="IPR002684">
    <property type="entry name" value="Biotin_synth/BioAB"/>
</dbReference>
<dbReference type="InterPro" id="IPR024177">
    <property type="entry name" value="Biotin_synthase"/>
</dbReference>
<dbReference type="InterPro" id="IPR006638">
    <property type="entry name" value="Elp3/MiaA/NifB-like_rSAM"/>
</dbReference>
<dbReference type="InterPro" id="IPR007197">
    <property type="entry name" value="rSAM"/>
</dbReference>
<dbReference type="NCBIfam" id="TIGR00433">
    <property type="entry name" value="bioB"/>
    <property type="match status" value="1"/>
</dbReference>
<dbReference type="PANTHER" id="PTHR22976">
    <property type="entry name" value="BIOTIN SYNTHASE"/>
    <property type="match status" value="1"/>
</dbReference>
<dbReference type="PANTHER" id="PTHR22976:SF2">
    <property type="entry name" value="BIOTIN SYNTHASE, MITOCHONDRIAL"/>
    <property type="match status" value="1"/>
</dbReference>
<dbReference type="Pfam" id="PF06968">
    <property type="entry name" value="BATS"/>
    <property type="match status" value="1"/>
</dbReference>
<dbReference type="Pfam" id="PF04055">
    <property type="entry name" value="Radical_SAM"/>
    <property type="match status" value="1"/>
</dbReference>
<dbReference type="PIRSF" id="PIRSF001619">
    <property type="entry name" value="Biotin_synth"/>
    <property type="match status" value="1"/>
</dbReference>
<dbReference type="SFLD" id="SFLDF00272">
    <property type="entry name" value="biotin_synthase"/>
    <property type="match status" value="1"/>
</dbReference>
<dbReference type="SFLD" id="SFLDG01278">
    <property type="entry name" value="biotin_synthase_like"/>
    <property type="match status" value="1"/>
</dbReference>
<dbReference type="SMART" id="SM00876">
    <property type="entry name" value="BATS"/>
    <property type="match status" value="1"/>
</dbReference>
<dbReference type="SMART" id="SM00729">
    <property type="entry name" value="Elp3"/>
    <property type="match status" value="1"/>
</dbReference>
<dbReference type="SUPFAM" id="SSF102114">
    <property type="entry name" value="Radical SAM enzymes"/>
    <property type="match status" value="1"/>
</dbReference>
<dbReference type="PROSITE" id="PS51918">
    <property type="entry name" value="RADICAL_SAM"/>
    <property type="match status" value="1"/>
</dbReference>
<feature type="chain" id="PRO_0000381538" description="Biotin synthase">
    <location>
        <begin position="1"/>
        <end position="335"/>
    </location>
</feature>
<feature type="domain" description="Radical SAM core" evidence="2">
    <location>
        <begin position="46"/>
        <end position="274"/>
    </location>
</feature>
<feature type="binding site" evidence="1">
    <location>
        <position position="61"/>
    </location>
    <ligand>
        <name>[4Fe-4S] cluster</name>
        <dbReference type="ChEBI" id="CHEBI:49883"/>
        <note>4Fe-4S-S-AdoMet</note>
    </ligand>
</feature>
<feature type="binding site" evidence="1">
    <location>
        <position position="65"/>
    </location>
    <ligand>
        <name>[4Fe-4S] cluster</name>
        <dbReference type="ChEBI" id="CHEBI:49883"/>
        <note>4Fe-4S-S-AdoMet</note>
    </ligand>
</feature>
<feature type="binding site" evidence="1">
    <location>
        <position position="68"/>
    </location>
    <ligand>
        <name>[4Fe-4S] cluster</name>
        <dbReference type="ChEBI" id="CHEBI:49883"/>
        <note>4Fe-4S-S-AdoMet</note>
    </ligand>
</feature>
<feature type="binding site" evidence="1">
    <location>
        <position position="105"/>
    </location>
    <ligand>
        <name>[2Fe-2S] cluster</name>
        <dbReference type="ChEBI" id="CHEBI:190135"/>
    </ligand>
</feature>
<feature type="binding site" evidence="1">
    <location>
        <position position="137"/>
    </location>
    <ligand>
        <name>[2Fe-2S] cluster</name>
        <dbReference type="ChEBI" id="CHEBI:190135"/>
    </ligand>
</feature>
<feature type="binding site" evidence="1">
    <location>
        <position position="197"/>
    </location>
    <ligand>
        <name>[2Fe-2S] cluster</name>
        <dbReference type="ChEBI" id="CHEBI:190135"/>
    </ligand>
</feature>
<feature type="binding site" evidence="1">
    <location>
        <position position="269"/>
    </location>
    <ligand>
        <name>[2Fe-2S] cluster</name>
        <dbReference type="ChEBI" id="CHEBI:190135"/>
    </ligand>
</feature>
<accession>A8G5G3</accession>
<name>BIOB_PROM2</name>
<comment type="function">
    <text evidence="1">Catalyzes the conversion of dethiobiotin (DTB) to biotin by the insertion of a sulfur atom into dethiobiotin via a radical-based mechanism.</text>
</comment>
<comment type="catalytic activity">
    <reaction evidence="1">
        <text>(4R,5S)-dethiobiotin + (sulfur carrier)-SH + 2 reduced [2Fe-2S]-[ferredoxin] + 2 S-adenosyl-L-methionine = (sulfur carrier)-H + biotin + 2 5'-deoxyadenosine + 2 L-methionine + 2 oxidized [2Fe-2S]-[ferredoxin]</text>
        <dbReference type="Rhea" id="RHEA:22060"/>
        <dbReference type="Rhea" id="RHEA-COMP:10000"/>
        <dbReference type="Rhea" id="RHEA-COMP:10001"/>
        <dbReference type="Rhea" id="RHEA-COMP:14737"/>
        <dbReference type="Rhea" id="RHEA-COMP:14739"/>
        <dbReference type="ChEBI" id="CHEBI:17319"/>
        <dbReference type="ChEBI" id="CHEBI:29917"/>
        <dbReference type="ChEBI" id="CHEBI:33737"/>
        <dbReference type="ChEBI" id="CHEBI:33738"/>
        <dbReference type="ChEBI" id="CHEBI:57586"/>
        <dbReference type="ChEBI" id="CHEBI:57844"/>
        <dbReference type="ChEBI" id="CHEBI:59789"/>
        <dbReference type="ChEBI" id="CHEBI:64428"/>
        <dbReference type="ChEBI" id="CHEBI:149473"/>
        <dbReference type="EC" id="2.8.1.6"/>
    </reaction>
</comment>
<comment type="cofactor">
    <cofactor evidence="1">
        <name>[4Fe-4S] cluster</name>
        <dbReference type="ChEBI" id="CHEBI:49883"/>
    </cofactor>
    <text evidence="1">Binds 1 [4Fe-4S] cluster. The cluster is coordinated with 3 cysteines and an exchangeable S-adenosyl-L-methionine.</text>
</comment>
<comment type="cofactor">
    <cofactor evidence="1">
        <name>[2Fe-2S] cluster</name>
        <dbReference type="ChEBI" id="CHEBI:190135"/>
    </cofactor>
    <text evidence="1">Binds 1 [2Fe-2S] cluster. The cluster is coordinated with 3 cysteines and 1 arginine.</text>
</comment>
<comment type="pathway">
    <text evidence="1">Cofactor biosynthesis; biotin biosynthesis; biotin from 7,8-diaminononanoate: step 2/2.</text>
</comment>
<comment type="subunit">
    <text evidence="1">Homodimer.</text>
</comment>
<comment type="similarity">
    <text evidence="1">Belongs to the radical SAM superfamily. Biotin synthase family.</text>
</comment>
<evidence type="ECO:0000255" key="1">
    <source>
        <dbReference type="HAMAP-Rule" id="MF_01694"/>
    </source>
</evidence>
<evidence type="ECO:0000255" key="2">
    <source>
        <dbReference type="PROSITE-ProRule" id="PRU01266"/>
    </source>
</evidence>
<sequence>MANSNNQLLKEIRFDWNKEEILEILNMPLIDLMWESQTIHRKFNKYDIQLASLFSVKTGGCEENCSYCSQSIYSASEIKSHPQFQVEEVLARAQIAKKEGADRFCMGWAWREIRDGKSFNAMLEMVSGVRDLGMEACVTAGMLTEEQAARLADAGLTAYNHNLDTSPEHYKNIITTRTYQDRLDTIKRVRNAGINVCCGGIIGLGETNGDRASLLKVLSNMNPHPESVPINSLVAIEGTGLEDNQEIDSIEMIRMIATARILMPKSKIRLSAGREKLSKEAQILCFQCGANSIFYGDELLTTSNPSFQSDRKLLKEVGVSFNKDFETREKTLSSL</sequence>